<reference key="1">
    <citation type="journal article" date="2001" name="J. Membr. Biol.">
        <title>Cloning and function of the rat colonic epithelial K+ channel KVLQT1.</title>
        <authorList>
            <person name="Kunzelmann K."/>
            <person name="Huebner M."/>
            <person name="Schreiber R."/>
            <person name="Levy-Holzman R."/>
            <person name="Garty H."/>
            <person name="Bleich M."/>
            <person name="Warth R."/>
            <person name="Slavik M."/>
            <person name="von Hahn T."/>
            <person name="Greger R."/>
        </authorList>
    </citation>
    <scope>NUCLEOTIDE SEQUENCE [MRNA]</scope>
    <source>
        <strain>Wistar</strain>
        <tissue>Colon</tissue>
    </source>
</reference>
<reference key="2">
    <citation type="journal article" date="2004" name="Genome Res.">
        <title>The status, quality, and expansion of the NIH full-length cDNA project: the Mammalian Gene Collection (MGC).</title>
        <authorList>
            <consortium name="The MGC Project Team"/>
        </authorList>
    </citation>
    <scope>NUCLEOTIDE SEQUENCE [LARGE SCALE MRNA]</scope>
    <source>
        <tissue>Ovary</tissue>
    </source>
</reference>
<reference key="3">
    <citation type="journal article" date="2003" name="J. Neurosci.">
        <title>MinK-related peptide 2 modulates Kv2.1 and Kv3.1 potassium channels in mammalian brain.</title>
        <authorList>
            <person name="McCrossan Z.A."/>
            <person name="Lewis A."/>
            <person name="Panaghie G."/>
            <person name="Jordan P.N."/>
            <person name="Christini D.J."/>
            <person name="Lerner D.J."/>
            <person name="Abbott G.W."/>
        </authorList>
    </citation>
    <scope>FUNCTION</scope>
    <scope>INTERACTION WITH KCNB1</scope>
    <scope>SUBCELLULAR LOCATION</scope>
</reference>
<reference key="4">
    <citation type="journal article" date="2004" name="J. Biol. Chem.">
        <title>MinK, MiRP1, and MiRP2 diversify Kv3.1 and Kv3.2 potassium channel gating.</title>
        <authorList>
            <person name="Lewis A."/>
            <person name="McCrossan Z.A."/>
            <person name="Abbott G.W."/>
        </authorList>
    </citation>
    <scope>SUBUNIT</scope>
    <scope>INTERACTION WITH KCNC2</scope>
    <scope>SUBCELLULAR LOCATION</scope>
</reference>
<reference key="5">
    <citation type="journal article" date="2011" name="J. Physiol. (Lond.)">
        <title>Sexual dimorphism and oestrogen regulation of KCNE3 expression modulates the functional properties of KCNQ1 K[+] channels.</title>
        <authorList>
            <person name="Alzamora R."/>
            <person name="O'Mahony F."/>
            <person name="Bustos V."/>
            <person name="Rapetti-Mauss R."/>
            <person name="Urbach V."/>
            <person name="Cid L.P."/>
            <person name="Sepulveda F.V."/>
            <person name="Harvey B.J."/>
        </authorList>
    </citation>
    <scope>INTERACTION WITH KCNQ1</scope>
    <scope>FUNCTION</scope>
</reference>
<organism>
    <name type="scientific">Rattus norvegicus</name>
    <name type="common">Rat</name>
    <dbReference type="NCBI Taxonomy" id="10116"/>
    <lineage>
        <taxon>Eukaryota</taxon>
        <taxon>Metazoa</taxon>
        <taxon>Chordata</taxon>
        <taxon>Craniata</taxon>
        <taxon>Vertebrata</taxon>
        <taxon>Euteleostomi</taxon>
        <taxon>Mammalia</taxon>
        <taxon>Eutheria</taxon>
        <taxon>Euarchontoglires</taxon>
        <taxon>Glires</taxon>
        <taxon>Rodentia</taxon>
        <taxon>Myomorpha</taxon>
        <taxon>Muroidea</taxon>
        <taxon>Muridae</taxon>
        <taxon>Murinae</taxon>
        <taxon>Rattus</taxon>
    </lineage>
</organism>
<dbReference type="EMBL" id="AJ271742">
    <property type="protein sequence ID" value="CAB72139.1"/>
    <property type="molecule type" value="mRNA"/>
</dbReference>
<dbReference type="EMBL" id="BC086406">
    <property type="protein sequence ID" value="AAH86406.1"/>
    <property type="molecule type" value="mRNA"/>
</dbReference>
<dbReference type="RefSeq" id="NP_071571.1">
    <property type="nucleotide sequence ID" value="NM_022235.2"/>
</dbReference>
<dbReference type="RefSeq" id="XP_006229848.1">
    <property type="nucleotide sequence ID" value="XM_006229786.3"/>
</dbReference>
<dbReference type="SMR" id="Q9JJV7"/>
<dbReference type="FunCoup" id="Q9JJV7">
    <property type="interactions" value="93"/>
</dbReference>
<dbReference type="STRING" id="10116.ENSRNOP00000044706"/>
<dbReference type="GlyCosmos" id="Q9JJV7">
    <property type="glycosylation" value="3 sites, No reported glycans"/>
</dbReference>
<dbReference type="GlyGen" id="Q9JJV7">
    <property type="glycosylation" value="4 sites"/>
</dbReference>
<dbReference type="PhosphoSitePlus" id="Q9JJV7"/>
<dbReference type="PaxDb" id="10116-ENSRNOP00000044706"/>
<dbReference type="GeneID" id="63883"/>
<dbReference type="KEGG" id="rno:63883"/>
<dbReference type="UCSC" id="RGD:621384">
    <property type="organism name" value="rat"/>
</dbReference>
<dbReference type="AGR" id="RGD:621384"/>
<dbReference type="CTD" id="10008"/>
<dbReference type="RGD" id="621384">
    <property type="gene designation" value="Kcne3"/>
</dbReference>
<dbReference type="eggNOG" id="ENOG502S4UF">
    <property type="taxonomic scope" value="Eukaryota"/>
</dbReference>
<dbReference type="HOGENOM" id="CLU_180169_0_0_1"/>
<dbReference type="InParanoid" id="Q9JJV7"/>
<dbReference type="OrthoDB" id="9907547at2759"/>
<dbReference type="PhylomeDB" id="Q9JJV7"/>
<dbReference type="TreeFam" id="TF335981"/>
<dbReference type="Reactome" id="R-RNO-5576890">
    <property type="pathway name" value="Phase 3 - rapid repolarisation"/>
</dbReference>
<dbReference type="Reactome" id="R-RNO-5576893">
    <property type="pathway name" value="Phase 2 - plateau phase"/>
</dbReference>
<dbReference type="PRO" id="PR:Q9JJV7"/>
<dbReference type="Proteomes" id="UP000002494">
    <property type="component" value="Chromosome 1"/>
</dbReference>
<dbReference type="Bgee" id="ENSRNOG00000017054">
    <property type="expression patterns" value="Expressed in colon and 16 other cell types or tissues"/>
</dbReference>
<dbReference type="GO" id="GO:1990794">
    <property type="term" value="C:basolateral part of cell"/>
    <property type="evidence" value="ECO:0000266"/>
    <property type="project" value="RGD"/>
</dbReference>
<dbReference type="GO" id="GO:0005737">
    <property type="term" value="C:cytoplasm"/>
    <property type="evidence" value="ECO:0000250"/>
    <property type="project" value="UniProtKB"/>
</dbReference>
<dbReference type="GO" id="GO:0030425">
    <property type="term" value="C:dendrite"/>
    <property type="evidence" value="ECO:0000250"/>
    <property type="project" value="UniProtKB"/>
</dbReference>
<dbReference type="GO" id="GO:0045121">
    <property type="term" value="C:membrane raft"/>
    <property type="evidence" value="ECO:0000266"/>
    <property type="project" value="RGD"/>
</dbReference>
<dbReference type="GO" id="GO:0032809">
    <property type="term" value="C:neuronal cell body membrane"/>
    <property type="evidence" value="ECO:0000250"/>
    <property type="project" value="UniProtKB"/>
</dbReference>
<dbReference type="GO" id="GO:0043204">
    <property type="term" value="C:perikaryon"/>
    <property type="evidence" value="ECO:0000250"/>
    <property type="project" value="UniProtKB"/>
</dbReference>
<dbReference type="GO" id="GO:0005886">
    <property type="term" value="C:plasma membrane"/>
    <property type="evidence" value="ECO:0000314"/>
    <property type="project" value="UniProtKB"/>
</dbReference>
<dbReference type="GO" id="GO:0031982">
    <property type="term" value="C:vesicle"/>
    <property type="evidence" value="ECO:0000250"/>
    <property type="project" value="UniProtKB"/>
</dbReference>
<dbReference type="GO" id="GO:0008076">
    <property type="term" value="C:voltage-gated potassium channel complex"/>
    <property type="evidence" value="ECO:0000266"/>
    <property type="project" value="RGD"/>
</dbReference>
<dbReference type="GO" id="GO:0015459">
    <property type="term" value="F:potassium channel regulator activity"/>
    <property type="evidence" value="ECO:0000314"/>
    <property type="project" value="UniProtKB"/>
</dbReference>
<dbReference type="GO" id="GO:0044325">
    <property type="term" value="F:transmembrane transporter binding"/>
    <property type="evidence" value="ECO:0000353"/>
    <property type="project" value="UniProtKB"/>
</dbReference>
<dbReference type="GO" id="GO:0005249">
    <property type="term" value="F:voltage-gated potassium channel activity"/>
    <property type="evidence" value="ECO:0007669"/>
    <property type="project" value="InterPro"/>
</dbReference>
<dbReference type="GO" id="GO:0030644">
    <property type="term" value="P:intracellular chloride ion homeostasis"/>
    <property type="evidence" value="ECO:0000266"/>
    <property type="project" value="RGD"/>
</dbReference>
<dbReference type="GO" id="GO:0086011">
    <property type="term" value="P:membrane repolarization during action potential"/>
    <property type="evidence" value="ECO:0000318"/>
    <property type="project" value="GO_Central"/>
</dbReference>
<dbReference type="GO" id="GO:0098915">
    <property type="term" value="P:membrane repolarization during ventricular cardiac muscle cell action potential"/>
    <property type="evidence" value="ECO:0007669"/>
    <property type="project" value="GOC"/>
</dbReference>
<dbReference type="GO" id="GO:1902260">
    <property type="term" value="P:negative regulation of delayed rectifier potassium channel activity"/>
    <property type="evidence" value="ECO:0000314"/>
    <property type="project" value="UniProtKB"/>
</dbReference>
<dbReference type="GO" id="GO:1905025">
    <property type="term" value="P:negative regulation of membrane repolarization during ventricular cardiac muscle cell action potential"/>
    <property type="evidence" value="ECO:0000266"/>
    <property type="project" value="RGD"/>
</dbReference>
<dbReference type="GO" id="GO:1903765">
    <property type="term" value="P:negative regulation of potassium ion export across plasma membrane"/>
    <property type="evidence" value="ECO:0000266"/>
    <property type="project" value="RGD"/>
</dbReference>
<dbReference type="GO" id="GO:0097623">
    <property type="term" value="P:potassium ion export across plasma membrane"/>
    <property type="evidence" value="ECO:0000318"/>
    <property type="project" value="GO_Central"/>
</dbReference>
<dbReference type="GO" id="GO:0071805">
    <property type="term" value="P:potassium ion transmembrane transport"/>
    <property type="evidence" value="ECO:0000266"/>
    <property type="project" value="RGD"/>
</dbReference>
<dbReference type="GO" id="GO:0086091">
    <property type="term" value="P:regulation of heart rate by cardiac conduction"/>
    <property type="evidence" value="ECO:0000266"/>
    <property type="project" value="RGD"/>
</dbReference>
<dbReference type="GO" id="GO:0043266">
    <property type="term" value="P:regulation of potassium ion transport"/>
    <property type="evidence" value="ECO:0000315"/>
    <property type="project" value="RGD"/>
</dbReference>
<dbReference type="GO" id="GO:0060307">
    <property type="term" value="P:regulation of ventricular cardiac muscle cell membrane repolarization"/>
    <property type="evidence" value="ECO:0000318"/>
    <property type="project" value="GO_Central"/>
</dbReference>
<dbReference type="GO" id="GO:0006814">
    <property type="term" value="P:sodium ion transport"/>
    <property type="evidence" value="ECO:0000266"/>
    <property type="project" value="RGD"/>
</dbReference>
<dbReference type="GO" id="GO:0086005">
    <property type="term" value="P:ventricular cardiac muscle cell action potential"/>
    <property type="evidence" value="ECO:0000318"/>
    <property type="project" value="GO_Central"/>
</dbReference>
<dbReference type="InterPro" id="IPR000369">
    <property type="entry name" value="K_chnl_KCNE"/>
</dbReference>
<dbReference type="InterPro" id="IPR005426">
    <property type="entry name" value="K_chnl_volt-dep_bsu_KCNE3"/>
</dbReference>
<dbReference type="PANTHER" id="PTHR15282">
    <property type="entry name" value="POTASSIUM VOLTAGE-GATED CHANNEL SUBFAMILY E MEMBER 1, 3"/>
    <property type="match status" value="1"/>
</dbReference>
<dbReference type="PANTHER" id="PTHR15282:SF6">
    <property type="entry name" value="POTASSIUM VOLTAGE-GATED CHANNEL SUBFAMILY E MEMBER 3"/>
    <property type="match status" value="1"/>
</dbReference>
<dbReference type="Pfam" id="PF02060">
    <property type="entry name" value="ISK_Channel"/>
    <property type="match status" value="1"/>
</dbReference>
<dbReference type="PRINTS" id="PR01606">
    <property type="entry name" value="KCNE3CHANNEL"/>
</dbReference>
<dbReference type="PRINTS" id="PR00168">
    <property type="entry name" value="KCNECHANNEL"/>
</dbReference>
<accession>Q9JJV7</accession>
<protein>
    <recommendedName>
        <fullName evidence="7">Potassium voltage-gated channel subfamily E member 3</fullName>
    </recommendedName>
    <alternativeName>
        <fullName>MinK-related peptide 2</fullName>
        <shortName evidence="8">MiRP2</shortName>
    </alternativeName>
    <alternativeName>
        <fullName>Minimum potassium ion channel-related peptide 2</fullName>
    </alternativeName>
    <alternativeName>
        <fullName>Potassium channel subunit beta MiRP2</fullName>
    </alternativeName>
</protein>
<proteinExistence type="evidence at protein level"/>
<gene>
    <name evidence="10" type="primary">Kcne3</name>
</gene>
<sequence length="107" mass="12001">METSNGTETWYKSLHAVLKALNTTLHSHLLCRPGPGPGSGTGPDNQTEDHRASLPGRNDNSYMYILFVMFLFAVTVGSLILGYTRSRKVDKRSDPYHVYIKNRVSMI</sequence>
<name>KCNE3_RAT</name>
<feature type="chain" id="PRO_0000144291" description="Potassium voltage-gated channel subfamily E member 3">
    <location>
        <begin position="1"/>
        <end position="107"/>
    </location>
</feature>
<feature type="transmembrane region" description="Helical" evidence="1">
    <location>
        <begin position="61"/>
        <end position="81"/>
    </location>
</feature>
<feature type="topological domain" description="Cytoplasmic" evidence="9">
    <location>
        <begin position="82"/>
        <end position="103"/>
    </location>
</feature>
<feature type="region of interest" description="Disordered" evidence="3">
    <location>
        <begin position="31"/>
        <end position="54"/>
    </location>
</feature>
<feature type="region of interest" description="Interaction with KCNQ1" evidence="1">
    <location>
        <begin position="72"/>
        <end position="83"/>
    </location>
</feature>
<feature type="glycosylation site" description="N-linked (GlcNAc...) asparagine" evidence="2">
    <location>
        <position position="5"/>
    </location>
</feature>
<feature type="glycosylation site" description="N-linked (GlcNAc...) asparagine" evidence="2">
    <location>
        <position position="22"/>
    </location>
</feature>
<feature type="glycosylation site" description="N-linked (GlcNAc...) asparagine" evidence="2">
    <location>
        <position position="45"/>
    </location>
</feature>
<evidence type="ECO:0000250" key="1">
    <source>
        <dbReference type="UniProtKB" id="Q9Y6H6"/>
    </source>
</evidence>
<evidence type="ECO:0000255" key="2"/>
<evidence type="ECO:0000256" key="3">
    <source>
        <dbReference type="SAM" id="MobiDB-lite"/>
    </source>
</evidence>
<evidence type="ECO:0000269" key="4">
    <source>
    </source>
</evidence>
<evidence type="ECO:0000269" key="5">
    <source>
    </source>
</evidence>
<evidence type="ECO:0000269" key="6">
    <source>
    </source>
</evidence>
<evidence type="ECO:0000303" key="7">
    <source>
    </source>
</evidence>
<evidence type="ECO:0000303" key="8">
    <source>
    </source>
</evidence>
<evidence type="ECO:0000305" key="9"/>
<evidence type="ECO:0000312" key="10">
    <source>
        <dbReference type="RGD" id="621384"/>
    </source>
</evidence>
<comment type="function">
    <text evidence="1 4 6">Ancillary protein that functions as a regulatory subunit of the voltage-gated potassium (Kv) channel complex composed of pore-forming and potassium-conducting alpha subunits and of regulatory beta subunits. KCNE3 beta subunit modulates the gating kinetics and enhances stability of the channel complex (PubMed:12954870, PubMed:21911611). Alters the gating of the delayed rectifier Kv channel containing KCNB1 alpha subunit (PubMed:12954870). Associates with KCNC4/Kv3.4 alpha subunit to form the subthreshold Kv channel in skeletal muscle and to establish the resting membrane potential (RMP) in muscle cells (By similarity). Association with KCNQ1/KCLQT1 alpha subunit may form the intestinal cAMP-stimulated potassium channel involved in chloride secretion that produces a current with nearly instantaneous activation with a linear current-voltage relationship (PubMed:21911611).</text>
</comment>
<comment type="subunit">
    <text evidence="1 4 5 6">Interacts with KCNB1 (PubMed:12954870). Interacts with KCNC2 (PubMed:14679187). Associates with KCNC4/Kv3.4 (By similarity). Interacts with KCNQ1; associates with a KCNQ1:KCNE3 stoichiometry of 4:4; produces a current with nearly instantaneous activation with a linear current-voltage relationship and alters membrane raft localization; affects KCNQ1 structure and gating properties (PubMed:21911611).</text>
</comment>
<comment type="subcellular location">
    <subcellularLocation>
        <location evidence="4 5">Cell membrane</location>
        <topology evidence="9">Single-pass type I membrane protein</topology>
    </subcellularLocation>
    <subcellularLocation>
        <location evidence="4">Cytoplasm</location>
    </subcellularLocation>
    <subcellularLocation>
        <location evidence="1">Perikaryon</location>
    </subcellularLocation>
    <subcellularLocation>
        <location evidence="1">Cell projection</location>
        <location evidence="1">Dendrite</location>
    </subcellularLocation>
    <subcellularLocation>
        <location evidence="1">Membrane raft</location>
    </subcellularLocation>
    <text evidence="1">Colocalizes with KCNB1 at high-density somatodendritic clusters on the surface of hippocampal neurons.</text>
</comment>
<comment type="similarity">
    <text evidence="9">Belongs to the potassium channel KCNE family.</text>
</comment>
<keyword id="KW-1003">Cell membrane</keyword>
<keyword id="KW-0966">Cell projection</keyword>
<keyword id="KW-0963">Cytoplasm</keyword>
<keyword id="KW-0325">Glycoprotein</keyword>
<keyword id="KW-0406">Ion transport</keyword>
<keyword id="KW-0472">Membrane</keyword>
<keyword id="KW-0630">Potassium</keyword>
<keyword id="KW-0633">Potassium transport</keyword>
<keyword id="KW-1185">Reference proteome</keyword>
<keyword id="KW-0812">Transmembrane</keyword>
<keyword id="KW-1133">Transmembrane helix</keyword>
<keyword id="KW-0813">Transport</keyword>